<organism>
    <name type="scientific">Halobacterium salinarum (strain ATCC 700922 / JCM 11081 / NRC-1)</name>
    <name type="common">Halobacterium halobium</name>
    <dbReference type="NCBI Taxonomy" id="64091"/>
    <lineage>
        <taxon>Archaea</taxon>
        <taxon>Methanobacteriati</taxon>
        <taxon>Methanobacteriota</taxon>
        <taxon>Stenosarchaea group</taxon>
        <taxon>Halobacteria</taxon>
        <taxon>Halobacteriales</taxon>
        <taxon>Halobacteriaceae</taxon>
        <taxon>Halobacterium</taxon>
        <taxon>Halobacterium salinarum NRC-34001</taxon>
    </lineage>
</organism>
<gene>
    <name evidence="1" type="primary">ribH</name>
    <name type="synonym">ribE</name>
    <name type="ordered locus">VNG_0630G</name>
</gene>
<accession>Q9HRM5</accession>
<dbReference type="EC" id="2.5.1.78" evidence="1"/>
<dbReference type="EMBL" id="AE004437">
    <property type="protein sequence ID" value="AAG19133.1"/>
    <property type="molecule type" value="Genomic_DNA"/>
</dbReference>
<dbReference type="PIR" id="A84221">
    <property type="entry name" value="A84221"/>
</dbReference>
<dbReference type="RefSeq" id="WP_010902429.1">
    <property type="nucleotide sequence ID" value="NC_002607.1"/>
</dbReference>
<dbReference type="SMR" id="Q9HRM5"/>
<dbReference type="FunCoup" id="Q9HRM5">
    <property type="interactions" value="72"/>
</dbReference>
<dbReference type="STRING" id="64091.VNG_0630G"/>
<dbReference type="PaxDb" id="64091-VNG_0630G"/>
<dbReference type="GeneID" id="89349098"/>
<dbReference type="KEGG" id="hal:VNG_0630G"/>
<dbReference type="PATRIC" id="fig|64091.14.peg.480"/>
<dbReference type="HOGENOM" id="CLU_089358_3_0_2"/>
<dbReference type="InParanoid" id="Q9HRM5"/>
<dbReference type="OrthoDB" id="7610at2157"/>
<dbReference type="PhylomeDB" id="Q9HRM5"/>
<dbReference type="BRENDA" id="2.5.1.78">
    <property type="organism ID" value="2552"/>
</dbReference>
<dbReference type="UniPathway" id="UPA00275">
    <property type="reaction ID" value="UER00404"/>
</dbReference>
<dbReference type="Proteomes" id="UP000000554">
    <property type="component" value="Chromosome"/>
</dbReference>
<dbReference type="GO" id="GO:0005737">
    <property type="term" value="C:cytoplasm"/>
    <property type="evidence" value="ECO:0000318"/>
    <property type="project" value="GO_Central"/>
</dbReference>
<dbReference type="GO" id="GO:0009349">
    <property type="term" value="C:riboflavin synthase complex"/>
    <property type="evidence" value="ECO:0007669"/>
    <property type="project" value="InterPro"/>
</dbReference>
<dbReference type="GO" id="GO:0000906">
    <property type="term" value="F:6,7-dimethyl-8-ribityllumazine synthase activity"/>
    <property type="evidence" value="ECO:0000318"/>
    <property type="project" value="GO_Central"/>
</dbReference>
<dbReference type="GO" id="GO:0009231">
    <property type="term" value="P:riboflavin biosynthetic process"/>
    <property type="evidence" value="ECO:0000318"/>
    <property type="project" value="GO_Central"/>
</dbReference>
<dbReference type="Gene3D" id="3.40.50.960">
    <property type="entry name" value="Lumazine/riboflavin synthase"/>
    <property type="match status" value="1"/>
</dbReference>
<dbReference type="HAMAP" id="MF_00178">
    <property type="entry name" value="Lumazine_synth"/>
    <property type="match status" value="1"/>
</dbReference>
<dbReference type="InterPro" id="IPR034964">
    <property type="entry name" value="LS"/>
</dbReference>
<dbReference type="InterPro" id="IPR002180">
    <property type="entry name" value="LS/RS"/>
</dbReference>
<dbReference type="InterPro" id="IPR036467">
    <property type="entry name" value="LS/RS_sf"/>
</dbReference>
<dbReference type="NCBIfam" id="TIGR00114">
    <property type="entry name" value="lumazine-synth"/>
    <property type="match status" value="1"/>
</dbReference>
<dbReference type="PANTHER" id="PTHR21058:SF0">
    <property type="entry name" value="6,7-DIMETHYL-8-RIBITYLLUMAZINE SYNTHASE"/>
    <property type="match status" value="1"/>
</dbReference>
<dbReference type="PANTHER" id="PTHR21058">
    <property type="entry name" value="6,7-DIMETHYL-8-RIBITYLLUMAZINE SYNTHASE DMRL SYNTHASE LUMAZINE SYNTHASE"/>
    <property type="match status" value="1"/>
</dbReference>
<dbReference type="Pfam" id="PF00885">
    <property type="entry name" value="DMRL_synthase"/>
    <property type="match status" value="1"/>
</dbReference>
<dbReference type="SUPFAM" id="SSF52121">
    <property type="entry name" value="Lumazine synthase"/>
    <property type="match status" value="1"/>
</dbReference>
<keyword id="KW-1185">Reference proteome</keyword>
<keyword id="KW-0686">Riboflavin biosynthesis</keyword>
<keyword id="KW-0808">Transferase</keyword>
<protein>
    <recommendedName>
        <fullName evidence="1">6,7-dimethyl-8-ribityllumazine synthase</fullName>
        <shortName evidence="1">DMRL synthase</shortName>
        <shortName evidence="1">LS</shortName>
        <shortName evidence="1">Lumazine synthase</shortName>
        <ecNumber evidence="1">2.5.1.78</ecNumber>
    </recommendedName>
</protein>
<sequence length="133" mass="13719">MTRLGLVVAEFNRSVTERMEAAAREAAADADAAITDTVHVPGAYDSPLAADRLARRDDIDAVAVVGAIVTGDTDHDHVIASATADTLTDVSLERDTPVTFGVSGPGMSGAEARERVEKGAAAVESAVSLTQEL</sequence>
<feature type="chain" id="PRO_0000134841" description="6,7-dimethyl-8-ribityllumazine synthase">
    <location>
        <begin position="1"/>
        <end position="133"/>
    </location>
</feature>
<feature type="active site" description="Proton donor" evidence="1">
    <location>
        <position position="75"/>
    </location>
</feature>
<feature type="binding site" evidence="1">
    <location>
        <position position="11"/>
    </location>
    <ligand>
        <name>5-amino-6-(D-ribitylamino)uracil</name>
        <dbReference type="ChEBI" id="CHEBI:15934"/>
    </ligand>
</feature>
<feature type="binding site" evidence="1">
    <location>
        <begin position="43"/>
        <end position="45"/>
    </location>
    <ligand>
        <name>5-amino-6-(D-ribitylamino)uracil</name>
        <dbReference type="ChEBI" id="CHEBI:15934"/>
    </ligand>
</feature>
<feature type="binding site" evidence="1">
    <location>
        <begin position="67"/>
        <end position="69"/>
    </location>
    <ligand>
        <name>5-amino-6-(D-ribitylamino)uracil</name>
        <dbReference type="ChEBI" id="CHEBI:15934"/>
    </ligand>
</feature>
<feature type="binding site" evidence="1">
    <location>
        <begin position="72"/>
        <end position="73"/>
    </location>
    <ligand>
        <name>(2S)-2-hydroxy-3-oxobutyl phosphate</name>
        <dbReference type="ChEBI" id="CHEBI:58830"/>
    </ligand>
</feature>
<feature type="binding site" evidence="1">
    <location>
        <position position="100"/>
    </location>
    <ligand>
        <name>5-amino-6-(D-ribitylamino)uracil</name>
        <dbReference type="ChEBI" id="CHEBI:15934"/>
    </ligand>
</feature>
<feature type="binding site" evidence="1">
    <location>
        <position position="115"/>
    </location>
    <ligand>
        <name>(2S)-2-hydroxy-3-oxobutyl phosphate</name>
        <dbReference type="ChEBI" id="CHEBI:58830"/>
    </ligand>
</feature>
<name>RISB_HALSA</name>
<comment type="function">
    <text evidence="1">Catalyzes the formation of 6,7-dimethyl-8-ribityllumazine by condensation of 5-amino-6-(D-ribitylamino)uracil with 3,4-dihydroxy-2-butanone 4-phosphate. This is the penultimate step in the biosynthesis of riboflavin.</text>
</comment>
<comment type="catalytic activity">
    <reaction evidence="1">
        <text>(2S)-2-hydroxy-3-oxobutyl phosphate + 5-amino-6-(D-ribitylamino)uracil = 6,7-dimethyl-8-(1-D-ribityl)lumazine + phosphate + 2 H2O + H(+)</text>
        <dbReference type="Rhea" id="RHEA:26152"/>
        <dbReference type="ChEBI" id="CHEBI:15377"/>
        <dbReference type="ChEBI" id="CHEBI:15378"/>
        <dbReference type="ChEBI" id="CHEBI:15934"/>
        <dbReference type="ChEBI" id="CHEBI:43474"/>
        <dbReference type="ChEBI" id="CHEBI:58201"/>
        <dbReference type="ChEBI" id="CHEBI:58830"/>
        <dbReference type="EC" id="2.5.1.78"/>
    </reaction>
</comment>
<comment type="pathway">
    <text evidence="1">Cofactor biosynthesis; riboflavin biosynthesis; riboflavin from 2-hydroxy-3-oxobutyl phosphate and 5-amino-6-(D-ribitylamino)uracil: step 1/2.</text>
</comment>
<comment type="similarity">
    <text evidence="1">Belongs to the DMRL synthase family.</text>
</comment>
<proteinExistence type="inferred from homology"/>
<reference key="1">
    <citation type="journal article" date="2000" name="Proc. Natl. Acad. Sci. U.S.A.">
        <title>Genome sequence of Halobacterium species NRC-1.</title>
        <authorList>
            <person name="Ng W.V."/>
            <person name="Kennedy S.P."/>
            <person name="Mahairas G.G."/>
            <person name="Berquist B."/>
            <person name="Pan M."/>
            <person name="Shukla H.D."/>
            <person name="Lasky S.R."/>
            <person name="Baliga N.S."/>
            <person name="Thorsson V."/>
            <person name="Sbrogna J."/>
            <person name="Swartzell S."/>
            <person name="Weir D."/>
            <person name="Hall J."/>
            <person name="Dahl T.A."/>
            <person name="Welti R."/>
            <person name="Goo Y.A."/>
            <person name="Leithauser B."/>
            <person name="Keller K."/>
            <person name="Cruz R."/>
            <person name="Danson M.J."/>
            <person name="Hough D.W."/>
            <person name="Maddocks D.G."/>
            <person name="Jablonski P.E."/>
            <person name="Krebs M.P."/>
            <person name="Angevine C.M."/>
            <person name="Dale H."/>
            <person name="Isenbarger T.A."/>
            <person name="Peck R.F."/>
            <person name="Pohlschroder M."/>
            <person name="Spudich J.L."/>
            <person name="Jung K.-H."/>
            <person name="Alam M."/>
            <person name="Freitas T."/>
            <person name="Hou S."/>
            <person name="Daniels C.J."/>
            <person name="Dennis P.P."/>
            <person name="Omer A.D."/>
            <person name="Ebhardt H."/>
            <person name="Lowe T.M."/>
            <person name="Liang P."/>
            <person name="Riley M."/>
            <person name="Hood L."/>
            <person name="DasSarma S."/>
        </authorList>
    </citation>
    <scope>NUCLEOTIDE SEQUENCE [LARGE SCALE GENOMIC DNA]</scope>
    <source>
        <strain>ATCC 700922 / JCM 11081 / NRC-1</strain>
    </source>
</reference>
<evidence type="ECO:0000255" key="1">
    <source>
        <dbReference type="HAMAP-Rule" id="MF_00178"/>
    </source>
</evidence>